<proteinExistence type="uncertain"/>
<protein>
    <recommendedName>
        <fullName>Putative uncharacterized protein YOR364W</fullName>
    </recommendedName>
</protein>
<organism>
    <name type="scientific">Saccharomyces cerevisiae (strain ATCC 204508 / S288c)</name>
    <name type="common">Baker's yeast</name>
    <dbReference type="NCBI Taxonomy" id="559292"/>
    <lineage>
        <taxon>Eukaryota</taxon>
        <taxon>Fungi</taxon>
        <taxon>Dikarya</taxon>
        <taxon>Ascomycota</taxon>
        <taxon>Saccharomycotina</taxon>
        <taxon>Saccharomycetes</taxon>
        <taxon>Saccharomycetales</taxon>
        <taxon>Saccharomycetaceae</taxon>
        <taxon>Saccharomyces</taxon>
    </lineage>
</organism>
<accession>Q08842</accession>
<accession>Q6B0W5</accession>
<name>YO364_YEAST</name>
<dbReference type="EMBL" id="Z75272">
    <property type="protein sequence ID" value="CAA99694.1"/>
    <property type="molecule type" value="Genomic_DNA"/>
</dbReference>
<dbReference type="EMBL" id="AY693315">
    <property type="protein sequence ID" value="AAT93334.1"/>
    <property type="molecule type" value="Genomic_DNA"/>
</dbReference>
<dbReference type="PIR" id="S67276">
    <property type="entry name" value="S67276"/>
</dbReference>
<dbReference type="DIP" id="DIP-4338N"/>
<dbReference type="STRING" id="4932.YOR364W"/>
<dbReference type="PaxDb" id="4932-YOR364W"/>
<dbReference type="EnsemblFungi" id="YOR364W_mRNA">
    <property type="protein sequence ID" value="YOR364W"/>
    <property type="gene ID" value="YOR364W"/>
</dbReference>
<dbReference type="AGR" id="SGD:S000005891"/>
<dbReference type="SGD" id="S000005891">
    <property type="gene designation" value="YOR364W"/>
</dbReference>
<dbReference type="HOGENOM" id="CLU_2028526_0_0_1"/>
<sequence>MVLQPFKFQNQKKFCRKANPTGRISHDFIYSHIQIFTVRILFTKVNLIDLRLLNTVAFKNGFLHFVQFRDRFVNRIIIHFTLQKGSSLIINRFVSCIRVFVVYCHRKAYQYENEEIQRKRCI</sequence>
<gene>
    <name type="ordered locus">YOR364W</name>
    <name type="ORF">O6658</name>
</gene>
<evidence type="ECO:0000305" key="1"/>
<evidence type="ECO:0000305" key="2">
    <source>
    </source>
</evidence>
<feature type="chain" id="PRO_0000299742" description="Putative uncharacterized protein YOR364W">
    <location>
        <begin position="1"/>
        <end position="122"/>
    </location>
</feature>
<feature type="sequence conflict" description="In Ref. 3; AAT93334." evidence="1" ref="3">
    <original>C</original>
    <variation>R</variation>
    <location>
        <position position="96"/>
    </location>
</feature>
<reference key="1">
    <citation type="journal article" date="1997" name="Nature">
        <title>The nucleotide sequence of Saccharomyces cerevisiae chromosome XV.</title>
        <authorList>
            <person name="Dujon B."/>
            <person name="Albermann K."/>
            <person name="Aldea M."/>
            <person name="Alexandraki D."/>
            <person name="Ansorge W."/>
            <person name="Arino J."/>
            <person name="Benes V."/>
            <person name="Bohn C."/>
            <person name="Bolotin-Fukuhara M."/>
            <person name="Bordonne R."/>
            <person name="Boyer J."/>
            <person name="Camasses A."/>
            <person name="Casamayor A."/>
            <person name="Casas C."/>
            <person name="Cheret G."/>
            <person name="Cziepluch C."/>
            <person name="Daignan-Fornier B."/>
            <person name="Dang V.-D."/>
            <person name="de Haan M."/>
            <person name="Delius H."/>
            <person name="Durand P."/>
            <person name="Fairhead C."/>
            <person name="Feldmann H."/>
            <person name="Gaillon L."/>
            <person name="Galisson F."/>
            <person name="Gamo F.-J."/>
            <person name="Gancedo C."/>
            <person name="Goffeau A."/>
            <person name="Goulding S.E."/>
            <person name="Grivell L.A."/>
            <person name="Habbig B."/>
            <person name="Hand N.J."/>
            <person name="Hani J."/>
            <person name="Hattenhorst U."/>
            <person name="Hebling U."/>
            <person name="Hernando Y."/>
            <person name="Herrero E."/>
            <person name="Heumann K."/>
            <person name="Hiesel R."/>
            <person name="Hilger F."/>
            <person name="Hofmann B."/>
            <person name="Hollenberg C.P."/>
            <person name="Hughes B."/>
            <person name="Jauniaux J.-C."/>
            <person name="Kalogeropoulos A."/>
            <person name="Katsoulou C."/>
            <person name="Kordes E."/>
            <person name="Lafuente M.J."/>
            <person name="Landt O."/>
            <person name="Louis E.J."/>
            <person name="Maarse A.C."/>
            <person name="Madania A."/>
            <person name="Mannhaupt G."/>
            <person name="Marck C."/>
            <person name="Martin R.P."/>
            <person name="Mewes H.-W."/>
            <person name="Michaux G."/>
            <person name="Paces V."/>
            <person name="Parle-McDermott A.G."/>
            <person name="Pearson B.M."/>
            <person name="Perrin A."/>
            <person name="Pettersson B."/>
            <person name="Poch O."/>
            <person name="Pohl T.M."/>
            <person name="Poirey R."/>
            <person name="Portetelle D."/>
            <person name="Pujol A."/>
            <person name="Purnelle B."/>
            <person name="Ramezani Rad M."/>
            <person name="Rechmann S."/>
            <person name="Schwager C."/>
            <person name="Schweizer M."/>
            <person name="Sor F."/>
            <person name="Sterky F."/>
            <person name="Tarassov I.A."/>
            <person name="Teodoru C."/>
            <person name="Tettelin H."/>
            <person name="Thierry A."/>
            <person name="Tobiasch E."/>
            <person name="Tzermia M."/>
            <person name="Uhlen M."/>
            <person name="Unseld M."/>
            <person name="Valens M."/>
            <person name="Vandenbol M."/>
            <person name="Vetter I."/>
            <person name="Vlcek C."/>
            <person name="Voet M."/>
            <person name="Volckaert G."/>
            <person name="Voss H."/>
            <person name="Wambutt R."/>
            <person name="Wedler H."/>
            <person name="Wiemann S."/>
            <person name="Winsor B."/>
            <person name="Wolfe K.H."/>
            <person name="Zollner A."/>
            <person name="Zumstein E."/>
            <person name="Kleine K."/>
        </authorList>
    </citation>
    <scope>NUCLEOTIDE SEQUENCE [LARGE SCALE GENOMIC DNA]</scope>
    <source>
        <strain>ATCC 204508 / S288c</strain>
    </source>
</reference>
<reference key="2">
    <citation type="journal article" date="2014" name="G3 (Bethesda)">
        <title>The reference genome sequence of Saccharomyces cerevisiae: Then and now.</title>
        <authorList>
            <person name="Engel S.R."/>
            <person name="Dietrich F.S."/>
            <person name="Fisk D.G."/>
            <person name="Binkley G."/>
            <person name="Balakrishnan R."/>
            <person name="Costanzo M.C."/>
            <person name="Dwight S.S."/>
            <person name="Hitz B.C."/>
            <person name="Karra K."/>
            <person name="Nash R.S."/>
            <person name="Weng S."/>
            <person name="Wong E.D."/>
            <person name="Lloyd P."/>
            <person name="Skrzypek M.S."/>
            <person name="Miyasato S.R."/>
            <person name="Simison M."/>
            <person name="Cherry J.M."/>
        </authorList>
    </citation>
    <scope>GENOME REANNOTATION</scope>
    <source>
        <strain>ATCC 204508 / S288c</strain>
    </source>
</reference>
<reference key="3">
    <citation type="journal article" date="2007" name="Genome Res.">
        <title>Approaching a complete repository of sequence-verified protein-encoding clones for Saccharomyces cerevisiae.</title>
        <authorList>
            <person name="Hu Y."/>
            <person name="Rolfs A."/>
            <person name="Bhullar B."/>
            <person name="Murthy T.V.S."/>
            <person name="Zhu C."/>
            <person name="Berger M.F."/>
            <person name="Camargo A.A."/>
            <person name="Kelley F."/>
            <person name="McCarron S."/>
            <person name="Jepson D."/>
            <person name="Richardson A."/>
            <person name="Raphael J."/>
            <person name="Moreira D."/>
            <person name="Taycher E."/>
            <person name="Zuo D."/>
            <person name="Mohr S."/>
            <person name="Kane M.F."/>
            <person name="Williamson J."/>
            <person name="Simpson A.J.G."/>
            <person name="Bulyk M.L."/>
            <person name="Harlow E."/>
            <person name="Marsischky G."/>
            <person name="Kolodner R.D."/>
            <person name="LaBaer J."/>
        </authorList>
    </citation>
    <scope>NUCLEOTIDE SEQUENCE [GENOMIC DNA]</scope>
    <source>
        <strain>ATCC 204508 / S288c</strain>
    </source>
</reference>
<comment type="miscellaneous">
    <text evidence="1">Partially overlaps YOR365C.</text>
</comment>
<comment type="caution">
    <text evidence="2">Product of a dubious gene prediction unlikely to encode a functional protein. Because of that it is not part of the S.cerevisiae S288c complete/reference proteome set.</text>
</comment>